<proteinExistence type="inferred from homology"/>
<name>RL33_ALIB4</name>
<comment type="similarity">
    <text evidence="1">Belongs to the bacterial ribosomal protein bL33 family.</text>
</comment>
<accession>A8EW01</accession>
<keyword id="KW-1185">Reference proteome</keyword>
<keyword id="KW-0687">Ribonucleoprotein</keyword>
<keyword id="KW-0689">Ribosomal protein</keyword>
<gene>
    <name evidence="1" type="primary">rpmG</name>
    <name type="ordered locus">Abu_1892</name>
</gene>
<evidence type="ECO:0000255" key="1">
    <source>
        <dbReference type="HAMAP-Rule" id="MF_00294"/>
    </source>
</evidence>
<evidence type="ECO:0000305" key="2"/>
<dbReference type="EMBL" id="CP000361">
    <property type="protein sequence ID" value="ABV68124.1"/>
    <property type="molecule type" value="Genomic_DNA"/>
</dbReference>
<dbReference type="RefSeq" id="WP_004511261.1">
    <property type="nucleotide sequence ID" value="NC_009850.1"/>
</dbReference>
<dbReference type="SMR" id="A8EW01"/>
<dbReference type="STRING" id="367737.Abu_1892"/>
<dbReference type="GeneID" id="24303907"/>
<dbReference type="KEGG" id="abu:Abu_1892"/>
<dbReference type="eggNOG" id="COG0267">
    <property type="taxonomic scope" value="Bacteria"/>
</dbReference>
<dbReference type="HOGENOM" id="CLU_190949_0_2_7"/>
<dbReference type="Proteomes" id="UP000001136">
    <property type="component" value="Chromosome"/>
</dbReference>
<dbReference type="GO" id="GO:0005737">
    <property type="term" value="C:cytoplasm"/>
    <property type="evidence" value="ECO:0007669"/>
    <property type="project" value="UniProtKB-ARBA"/>
</dbReference>
<dbReference type="GO" id="GO:1990904">
    <property type="term" value="C:ribonucleoprotein complex"/>
    <property type="evidence" value="ECO:0007669"/>
    <property type="project" value="UniProtKB-KW"/>
</dbReference>
<dbReference type="GO" id="GO:0005840">
    <property type="term" value="C:ribosome"/>
    <property type="evidence" value="ECO:0007669"/>
    <property type="project" value="UniProtKB-KW"/>
</dbReference>
<dbReference type="GO" id="GO:0003735">
    <property type="term" value="F:structural constituent of ribosome"/>
    <property type="evidence" value="ECO:0007669"/>
    <property type="project" value="InterPro"/>
</dbReference>
<dbReference type="GO" id="GO:0006412">
    <property type="term" value="P:translation"/>
    <property type="evidence" value="ECO:0007669"/>
    <property type="project" value="UniProtKB-UniRule"/>
</dbReference>
<dbReference type="Gene3D" id="2.20.28.120">
    <property type="entry name" value="Ribosomal protein L33"/>
    <property type="match status" value="1"/>
</dbReference>
<dbReference type="HAMAP" id="MF_00294">
    <property type="entry name" value="Ribosomal_bL33"/>
    <property type="match status" value="1"/>
</dbReference>
<dbReference type="InterPro" id="IPR001705">
    <property type="entry name" value="Ribosomal_bL33"/>
</dbReference>
<dbReference type="InterPro" id="IPR018264">
    <property type="entry name" value="Ribosomal_bL33_CS"/>
</dbReference>
<dbReference type="InterPro" id="IPR038584">
    <property type="entry name" value="Ribosomal_bL33_sf"/>
</dbReference>
<dbReference type="InterPro" id="IPR011332">
    <property type="entry name" value="Ribosomal_zn-bd"/>
</dbReference>
<dbReference type="NCBIfam" id="NF001764">
    <property type="entry name" value="PRK00504.1"/>
    <property type="match status" value="1"/>
</dbReference>
<dbReference type="NCBIfam" id="NF001860">
    <property type="entry name" value="PRK00595.1"/>
    <property type="match status" value="1"/>
</dbReference>
<dbReference type="NCBIfam" id="TIGR01023">
    <property type="entry name" value="rpmG_bact"/>
    <property type="match status" value="1"/>
</dbReference>
<dbReference type="PANTHER" id="PTHR43168">
    <property type="entry name" value="50S RIBOSOMAL PROTEIN L33, CHLOROPLASTIC"/>
    <property type="match status" value="1"/>
</dbReference>
<dbReference type="PANTHER" id="PTHR43168:SF6">
    <property type="entry name" value="LARGE RIBOSOMAL SUBUNIT PROTEIN BL33A"/>
    <property type="match status" value="1"/>
</dbReference>
<dbReference type="Pfam" id="PF00471">
    <property type="entry name" value="Ribosomal_L33"/>
    <property type="match status" value="1"/>
</dbReference>
<dbReference type="SUPFAM" id="SSF57829">
    <property type="entry name" value="Zn-binding ribosomal proteins"/>
    <property type="match status" value="1"/>
</dbReference>
<dbReference type="PROSITE" id="PS00582">
    <property type="entry name" value="RIBOSOMAL_L33"/>
    <property type="match status" value="1"/>
</dbReference>
<organism>
    <name type="scientific">Aliarcobacter butzleri (strain RM4018)</name>
    <name type="common">Arcobacter butzleri</name>
    <dbReference type="NCBI Taxonomy" id="367737"/>
    <lineage>
        <taxon>Bacteria</taxon>
        <taxon>Pseudomonadati</taxon>
        <taxon>Campylobacterota</taxon>
        <taxon>Epsilonproteobacteria</taxon>
        <taxon>Campylobacterales</taxon>
        <taxon>Arcobacteraceae</taxon>
        <taxon>Aliarcobacter</taxon>
    </lineage>
</organism>
<protein>
    <recommendedName>
        <fullName evidence="1">Large ribosomal subunit protein bL33</fullName>
    </recommendedName>
    <alternativeName>
        <fullName evidence="2">50S ribosomal protein L33</fullName>
    </alternativeName>
</protein>
<reference key="1">
    <citation type="journal article" date="2007" name="PLoS ONE">
        <title>The complete genome sequence and analysis of the Epsilonproteobacterium Arcobacter butzleri.</title>
        <authorList>
            <person name="Miller W.G."/>
            <person name="Parker C.T."/>
            <person name="Rubenfield M."/>
            <person name="Mendz G.L."/>
            <person name="Woesten M.M.S.M."/>
            <person name="Ussery D.W."/>
            <person name="Stolz J.F."/>
            <person name="Binnewies T.T."/>
            <person name="Hallin P.F."/>
            <person name="Wang G."/>
            <person name="Malek J.A."/>
            <person name="Rogosin A."/>
            <person name="Stanker L.H."/>
            <person name="Mandrell R.E."/>
        </authorList>
    </citation>
    <scope>NUCLEOTIDE SEQUENCE [LARGE SCALE GENOMIC DNA]</scope>
    <source>
        <strain>RM4018</strain>
    </source>
</reference>
<feature type="chain" id="PRO_0000356376" description="Large ribosomal subunit protein bL33">
    <location>
        <begin position="1"/>
        <end position="56"/>
    </location>
</feature>
<sequence>MANAVRIKIGLKCQESGDINYTTWKNPKTHTEKFEVKKYCPRLKKHTTHKEVKLKS</sequence>